<reference key="1">
    <citation type="journal article" date="2004" name="Nat. Biotechnol.">
        <title>Complete genome sequence of the metabolically versatile photosynthetic bacterium Rhodopseudomonas palustris.</title>
        <authorList>
            <person name="Larimer F.W."/>
            <person name="Chain P."/>
            <person name="Hauser L."/>
            <person name="Lamerdin J.E."/>
            <person name="Malfatti S."/>
            <person name="Do L."/>
            <person name="Land M.L."/>
            <person name="Pelletier D.A."/>
            <person name="Beatty J.T."/>
            <person name="Lang A.S."/>
            <person name="Tabita F.R."/>
            <person name="Gibson J.L."/>
            <person name="Hanson T.E."/>
            <person name="Bobst C."/>
            <person name="Torres y Torres J.L."/>
            <person name="Peres C."/>
            <person name="Harrison F.H."/>
            <person name="Gibson J."/>
            <person name="Harwood C.S."/>
        </authorList>
    </citation>
    <scope>NUCLEOTIDE SEQUENCE [LARGE SCALE GENOMIC DNA]</scope>
    <source>
        <strain>ATCC BAA-98 / CGA009</strain>
    </source>
</reference>
<organism>
    <name type="scientific">Rhodopseudomonas palustris (strain ATCC BAA-98 / CGA009)</name>
    <dbReference type="NCBI Taxonomy" id="258594"/>
    <lineage>
        <taxon>Bacteria</taxon>
        <taxon>Pseudomonadati</taxon>
        <taxon>Pseudomonadota</taxon>
        <taxon>Alphaproteobacteria</taxon>
        <taxon>Hyphomicrobiales</taxon>
        <taxon>Nitrobacteraceae</taxon>
        <taxon>Rhodopseudomonas</taxon>
    </lineage>
</organism>
<comment type="function">
    <text evidence="1">NDH-1 shuttles electrons from NADH, via FMN and iron-sulfur (Fe-S) centers, to quinones in the respiratory chain. The immediate electron acceptor for the enzyme in this species is believed to be ubiquinone. Couples the redox reaction to proton translocation (for every two electrons transferred, four hydrogen ions are translocated across the cytoplasmic membrane), and thus conserves the redox energy in a proton gradient.</text>
</comment>
<comment type="catalytic activity">
    <reaction evidence="1">
        <text>a quinone + NADH + 5 H(+)(in) = a quinol + NAD(+) + 4 H(+)(out)</text>
        <dbReference type="Rhea" id="RHEA:57888"/>
        <dbReference type="ChEBI" id="CHEBI:15378"/>
        <dbReference type="ChEBI" id="CHEBI:24646"/>
        <dbReference type="ChEBI" id="CHEBI:57540"/>
        <dbReference type="ChEBI" id="CHEBI:57945"/>
        <dbReference type="ChEBI" id="CHEBI:132124"/>
    </reaction>
</comment>
<comment type="cofactor">
    <cofactor evidence="1">
        <name>[4Fe-4S] cluster</name>
        <dbReference type="ChEBI" id="CHEBI:49883"/>
    </cofactor>
    <text evidence="1">Binds 1 [4Fe-4S] cluster.</text>
</comment>
<comment type="subunit">
    <text evidence="1">NDH-1 is composed of 14 different subunits. Subunits NuoB, C, D, E, F, and G constitute the peripheral sector of the complex.</text>
</comment>
<comment type="subcellular location">
    <subcellularLocation>
        <location evidence="1">Cell inner membrane</location>
        <topology evidence="1">Peripheral membrane protein</topology>
        <orientation evidence="1">Cytoplasmic side</orientation>
    </subcellularLocation>
</comment>
<comment type="similarity">
    <text evidence="1">Belongs to the complex I 20 kDa subunit family.</text>
</comment>
<keyword id="KW-0004">4Fe-4S</keyword>
<keyword id="KW-0997">Cell inner membrane</keyword>
<keyword id="KW-1003">Cell membrane</keyword>
<keyword id="KW-0408">Iron</keyword>
<keyword id="KW-0411">Iron-sulfur</keyword>
<keyword id="KW-0472">Membrane</keyword>
<keyword id="KW-0479">Metal-binding</keyword>
<keyword id="KW-0520">NAD</keyword>
<keyword id="KW-0874">Quinone</keyword>
<keyword id="KW-1278">Translocase</keyword>
<keyword id="KW-0813">Transport</keyword>
<keyword id="KW-0830">Ubiquinone</keyword>
<feature type="chain" id="PRO_0000376336" description="NADH-quinone oxidoreductase subunit B 1">
    <location>
        <begin position="1"/>
        <end position="198"/>
    </location>
</feature>
<feature type="binding site" evidence="1">
    <location>
        <position position="77"/>
    </location>
    <ligand>
        <name>[4Fe-4S] cluster</name>
        <dbReference type="ChEBI" id="CHEBI:49883"/>
    </ligand>
</feature>
<feature type="binding site" evidence="1">
    <location>
        <position position="78"/>
    </location>
    <ligand>
        <name>[4Fe-4S] cluster</name>
        <dbReference type="ChEBI" id="CHEBI:49883"/>
    </ligand>
</feature>
<feature type="binding site" evidence="1">
    <location>
        <position position="142"/>
    </location>
    <ligand>
        <name>[4Fe-4S] cluster</name>
        <dbReference type="ChEBI" id="CHEBI:49883"/>
    </ligand>
</feature>
<feature type="binding site" evidence="1">
    <location>
        <position position="172"/>
    </location>
    <ligand>
        <name>[4Fe-4S] cluster</name>
        <dbReference type="ChEBI" id="CHEBI:49883"/>
    </ligand>
</feature>
<proteinExistence type="inferred from homology"/>
<name>NUOB1_RHOPA</name>
<accession>Q6N5M3</accession>
<dbReference type="EC" id="7.1.1.-" evidence="1"/>
<dbReference type="EMBL" id="BX572602">
    <property type="protein sequence ID" value="CAE28392.1"/>
    <property type="molecule type" value="Genomic_DNA"/>
</dbReference>
<dbReference type="RefSeq" id="WP_011158500.1">
    <property type="nucleotide sequence ID" value="NZ_CP116810.1"/>
</dbReference>
<dbReference type="SMR" id="Q6N5M3"/>
<dbReference type="STRING" id="258594.RPA2951"/>
<dbReference type="GeneID" id="66894034"/>
<dbReference type="eggNOG" id="COG0377">
    <property type="taxonomic scope" value="Bacteria"/>
</dbReference>
<dbReference type="HOGENOM" id="CLU_055737_7_0_5"/>
<dbReference type="PhylomeDB" id="Q6N5M3"/>
<dbReference type="GO" id="GO:0005886">
    <property type="term" value="C:plasma membrane"/>
    <property type="evidence" value="ECO:0007669"/>
    <property type="project" value="UniProtKB-SubCell"/>
</dbReference>
<dbReference type="GO" id="GO:0045271">
    <property type="term" value="C:respiratory chain complex I"/>
    <property type="evidence" value="ECO:0007669"/>
    <property type="project" value="TreeGrafter"/>
</dbReference>
<dbReference type="GO" id="GO:0051539">
    <property type="term" value="F:4 iron, 4 sulfur cluster binding"/>
    <property type="evidence" value="ECO:0007669"/>
    <property type="project" value="UniProtKB-KW"/>
</dbReference>
<dbReference type="GO" id="GO:0005506">
    <property type="term" value="F:iron ion binding"/>
    <property type="evidence" value="ECO:0007669"/>
    <property type="project" value="UniProtKB-UniRule"/>
</dbReference>
<dbReference type="GO" id="GO:0008137">
    <property type="term" value="F:NADH dehydrogenase (ubiquinone) activity"/>
    <property type="evidence" value="ECO:0007669"/>
    <property type="project" value="InterPro"/>
</dbReference>
<dbReference type="GO" id="GO:0050136">
    <property type="term" value="F:NADH:ubiquinone reductase (non-electrogenic) activity"/>
    <property type="evidence" value="ECO:0007669"/>
    <property type="project" value="UniProtKB-UniRule"/>
</dbReference>
<dbReference type="GO" id="GO:0048038">
    <property type="term" value="F:quinone binding"/>
    <property type="evidence" value="ECO:0007669"/>
    <property type="project" value="UniProtKB-KW"/>
</dbReference>
<dbReference type="GO" id="GO:0009060">
    <property type="term" value="P:aerobic respiration"/>
    <property type="evidence" value="ECO:0007669"/>
    <property type="project" value="TreeGrafter"/>
</dbReference>
<dbReference type="GO" id="GO:0015990">
    <property type="term" value="P:electron transport coupled proton transport"/>
    <property type="evidence" value="ECO:0007669"/>
    <property type="project" value="TreeGrafter"/>
</dbReference>
<dbReference type="FunFam" id="3.40.50.12280:FF:000001">
    <property type="entry name" value="NADH-quinone oxidoreductase subunit B 2"/>
    <property type="match status" value="1"/>
</dbReference>
<dbReference type="Gene3D" id="3.40.50.12280">
    <property type="match status" value="1"/>
</dbReference>
<dbReference type="HAMAP" id="MF_01356">
    <property type="entry name" value="NDH1_NuoB"/>
    <property type="match status" value="1"/>
</dbReference>
<dbReference type="InterPro" id="IPR006137">
    <property type="entry name" value="NADH_UbQ_OxRdtase-like_20kDa"/>
</dbReference>
<dbReference type="InterPro" id="IPR006138">
    <property type="entry name" value="NADH_UQ_OxRdtase_20Kd_su"/>
</dbReference>
<dbReference type="NCBIfam" id="TIGR01957">
    <property type="entry name" value="nuoB_fam"/>
    <property type="match status" value="1"/>
</dbReference>
<dbReference type="NCBIfam" id="NF005012">
    <property type="entry name" value="PRK06411.1"/>
    <property type="match status" value="1"/>
</dbReference>
<dbReference type="PANTHER" id="PTHR11995">
    <property type="entry name" value="NADH DEHYDROGENASE"/>
    <property type="match status" value="1"/>
</dbReference>
<dbReference type="PANTHER" id="PTHR11995:SF14">
    <property type="entry name" value="NADH DEHYDROGENASE [UBIQUINONE] IRON-SULFUR PROTEIN 7, MITOCHONDRIAL"/>
    <property type="match status" value="1"/>
</dbReference>
<dbReference type="Pfam" id="PF01058">
    <property type="entry name" value="Oxidored_q6"/>
    <property type="match status" value="1"/>
</dbReference>
<dbReference type="SUPFAM" id="SSF56770">
    <property type="entry name" value="HydA/Nqo6-like"/>
    <property type="match status" value="1"/>
</dbReference>
<dbReference type="PROSITE" id="PS01150">
    <property type="entry name" value="COMPLEX1_20K"/>
    <property type="match status" value="1"/>
</dbReference>
<evidence type="ECO:0000255" key="1">
    <source>
        <dbReference type="HAMAP-Rule" id="MF_01356"/>
    </source>
</evidence>
<protein>
    <recommendedName>
        <fullName evidence="1">NADH-quinone oxidoreductase subunit B 1</fullName>
        <ecNumber evidence="1">7.1.1.-</ecNumber>
    </recommendedName>
    <alternativeName>
        <fullName evidence="1">NADH dehydrogenase I subunit B 1</fullName>
    </alternativeName>
    <alternativeName>
        <fullName evidence="1">NDH-1 subunit B 1</fullName>
    </alternativeName>
</protein>
<gene>
    <name evidence="1" type="primary">nuoB1</name>
    <name type="ordered locus">RPA2951</name>
</gene>
<sequence>MQPTPSQHPVGAQPLIARPATGIIDPNTGRPVGADDPFFLNVNRELSDKGFFVAATDDLITWARTGSLMWMTFGLACCAVEMMQLSMPRYDAERFGFAPRASPRQSDVMIVAGTLTNKMAPALRKVYDQMPEPRYVISMGSCANGGGYYHYSYSVVRGCDRIVPIDIYVPGCPPTAEALLYGVMLLQKKIRRTGTIER</sequence>